<proteinExistence type="inferred from homology"/>
<sequence>MIKIGVLALQGAVREHIRHIELSGYEGIAIKRVEQLDEIDGLILPGGESTTLRRLMDLYGFKEKLQQLDLPMFGTCAGLIVLAKNVENESGYLNKLDITVERNSFGRQVDSFESELDIKGIANDIEGVFIRAPHIAKVDNGVEILSKVGGKIVAVKQGQYLGVSFHPELTDDYRITKYFIEHMIKH</sequence>
<comment type="function">
    <text evidence="1">Catalyzes the hydrolysis of glutamine to glutamate and ammonia as part of the biosynthesis of pyridoxal 5'-phosphate. The resulting ammonia molecule is channeled to the active site of PdxS.</text>
</comment>
<comment type="catalytic activity">
    <reaction evidence="1">
        <text>aldehydo-D-ribose 5-phosphate + D-glyceraldehyde 3-phosphate + L-glutamine = pyridoxal 5'-phosphate + L-glutamate + phosphate + 3 H2O + H(+)</text>
        <dbReference type="Rhea" id="RHEA:31507"/>
        <dbReference type="ChEBI" id="CHEBI:15377"/>
        <dbReference type="ChEBI" id="CHEBI:15378"/>
        <dbReference type="ChEBI" id="CHEBI:29985"/>
        <dbReference type="ChEBI" id="CHEBI:43474"/>
        <dbReference type="ChEBI" id="CHEBI:58273"/>
        <dbReference type="ChEBI" id="CHEBI:58359"/>
        <dbReference type="ChEBI" id="CHEBI:59776"/>
        <dbReference type="ChEBI" id="CHEBI:597326"/>
        <dbReference type="EC" id="4.3.3.6"/>
    </reaction>
</comment>
<comment type="catalytic activity">
    <reaction evidence="1">
        <text>L-glutamine + H2O = L-glutamate + NH4(+)</text>
        <dbReference type="Rhea" id="RHEA:15889"/>
        <dbReference type="ChEBI" id="CHEBI:15377"/>
        <dbReference type="ChEBI" id="CHEBI:28938"/>
        <dbReference type="ChEBI" id="CHEBI:29985"/>
        <dbReference type="ChEBI" id="CHEBI:58359"/>
        <dbReference type="EC" id="3.5.1.2"/>
    </reaction>
</comment>
<comment type="pathway">
    <text evidence="1">Cofactor biosynthesis; pyridoxal 5'-phosphate biosynthesis.</text>
</comment>
<comment type="subunit">
    <text evidence="1">In the presence of PdxS, forms a dodecamer of heterodimers. Only shows activity in the heterodimer.</text>
</comment>
<comment type="similarity">
    <text evidence="1">Belongs to the glutaminase PdxT/SNO family.</text>
</comment>
<gene>
    <name evidence="1" type="primary">pdxT</name>
    <name type="ordered locus">SERP0159</name>
</gene>
<keyword id="KW-0315">Glutamine amidotransferase</keyword>
<keyword id="KW-0378">Hydrolase</keyword>
<keyword id="KW-0456">Lyase</keyword>
<keyword id="KW-0663">Pyridoxal phosphate</keyword>
<keyword id="KW-1185">Reference proteome</keyword>
<reference key="1">
    <citation type="journal article" date="2005" name="J. Bacteriol.">
        <title>Insights on evolution of virulence and resistance from the complete genome analysis of an early methicillin-resistant Staphylococcus aureus strain and a biofilm-producing methicillin-resistant Staphylococcus epidermidis strain.</title>
        <authorList>
            <person name="Gill S.R."/>
            <person name="Fouts D.E."/>
            <person name="Archer G.L."/>
            <person name="Mongodin E.F."/>
            <person name="DeBoy R.T."/>
            <person name="Ravel J."/>
            <person name="Paulsen I.T."/>
            <person name="Kolonay J.F."/>
            <person name="Brinkac L.M."/>
            <person name="Beanan M.J."/>
            <person name="Dodson R.J."/>
            <person name="Daugherty S.C."/>
            <person name="Madupu R."/>
            <person name="Angiuoli S.V."/>
            <person name="Durkin A.S."/>
            <person name="Haft D.H."/>
            <person name="Vamathevan J.J."/>
            <person name="Khouri H."/>
            <person name="Utterback T.R."/>
            <person name="Lee C."/>
            <person name="Dimitrov G."/>
            <person name="Jiang L."/>
            <person name="Qin H."/>
            <person name="Weidman J."/>
            <person name="Tran K."/>
            <person name="Kang K.H."/>
            <person name="Hance I.R."/>
            <person name="Nelson K.E."/>
            <person name="Fraser C.M."/>
        </authorList>
    </citation>
    <scope>NUCLEOTIDE SEQUENCE [LARGE SCALE GENOMIC DNA]</scope>
    <source>
        <strain>ATCC 35984 / DSM 28319 / BCRC 17069 / CCUG 31568 / BM 3577 / RP62A</strain>
    </source>
</reference>
<dbReference type="EC" id="4.3.3.6" evidence="1"/>
<dbReference type="EC" id="3.5.1.2" evidence="1"/>
<dbReference type="EMBL" id="CP000029">
    <property type="protein sequence ID" value="AAW53536.1"/>
    <property type="molecule type" value="Genomic_DNA"/>
</dbReference>
<dbReference type="SMR" id="Q5HRN4"/>
<dbReference type="STRING" id="176279.SERP0159"/>
<dbReference type="KEGG" id="ser:SERP0159"/>
<dbReference type="eggNOG" id="COG0311">
    <property type="taxonomic scope" value="Bacteria"/>
</dbReference>
<dbReference type="HOGENOM" id="CLU_069674_2_0_9"/>
<dbReference type="UniPathway" id="UPA00245"/>
<dbReference type="Proteomes" id="UP000000531">
    <property type="component" value="Chromosome"/>
</dbReference>
<dbReference type="GO" id="GO:0005829">
    <property type="term" value="C:cytosol"/>
    <property type="evidence" value="ECO:0007669"/>
    <property type="project" value="TreeGrafter"/>
</dbReference>
<dbReference type="GO" id="GO:1903600">
    <property type="term" value="C:glutaminase complex"/>
    <property type="evidence" value="ECO:0007669"/>
    <property type="project" value="TreeGrafter"/>
</dbReference>
<dbReference type="GO" id="GO:0004359">
    <property type="term" value="F:glutaminase activity"/>
    <property type="evidence" value="ECO:0007669"/>
    <property type="project" value="UniProtKB-UniRule"/>
</dbReference>
<dbReference type="GO" id="GO:0036381">
    <property type="term" value="F:pyridoxal 5'-phosphate synthase (glutamine hydrolysing) activity"/>
    <property type="evidence" value="ECO:0007669"/>
    <property type="project" value="UniProtKB-UniRule"/>
</dbReference>
<dbReference type="GO" id="GO:0006543">
    <property type="term" value="P:glutamine catabolic process"/>
    <property type="evidence" value="ECO:0007669"/>
    <property type="project" value="UniProtKB-UniRule"/>
</dbReference>
<dbReference type="GO" id="GO:0042823">
    <property type="term" value="P:pyridoxal phosphate biosynthetic process"/>
    <property type="evidence" value="ECO:0007669"/>
    <property type="project" value="UniProtKB-UniRule"/>
</dbReference>
<dbReference type="GO" id="GO:0008614">
    <property type="term" value="P:pyridoxine metabolic process"/>
    <property type="evidence" value="ECO:0007669"/>
    <property type="project" value="TreeGrafter"/>
</dbReference>
<dbReference type="CDD" id="cd01749">
    <property type="entry name" value="GATase1_PB"/>
    <property type="match status" value="1"/>
</dbReference>
<dbReference type="FunFam" id="3.40.50.880:FF:000010">
    <property type="entry name" value="uncharacterized protein LOC100176842 isoform X2"/>
    <property type="match status" value="1"/>
</dbReference>
<dbReference type="Gene3D" id="3.40.50.880">
    <property type="match status" value="1"/>
</dbReference>
<dbReference type="HAMAP" id="MF_01615">
    <property type="entry name" value="PdxT"/>
    <property type="match status" value="1"/>
</dbReference>
<dbReference type="InterPro" id="IPR029062">
    <property type="entry name" value="Class_I_gatase-like"/>
</dbReference>
<dbReference type="InterPro" id="IPR002161">
    <property type="entry name" value="PdxT/SNO"/>
</dbReference>
<dbReference type="InterPro" id="IPR021196">
    <property type="entry name" value="PdxT/SNO_CS"/>
</dbReference>
<dbReference type="NCBIfam" id="TIGR03800">
    <property type="entry name" value="PLP_synth_Pdx2"/>
    <property type="match status" value="1"/>
</dbReference>
<dbReference type="PANTHER" id="PTHR31559">
    <property type="entry name" value="PYRIDOXAL 5'-PHOSPHATE SYNTHASE SUBUNIT SNO"/>
    <property type="match status" value="1"/>
</dbReference>
<dbReference type="PANTHER" id="PTHR31559:SF0">
    <property type="entry name" value="PYRIDOXAL 5'-PHOSPHATE SYNTHASE SUBUNIT SNO1-RELATED"/>
    <property type="match status" value="1"/>
</dbReference>
<dbReference type="Pfam" id="PF01174">
    <property type="entry name" value="SNO"/>
    <property type="match status" value="1"/>
</dbReference>
<dbReference type="PIRSF" id="PIRSF005639">
    <property type="entry name" value="Glut_amidoT_SNO"/>
    <property type="match status" value="1"/>
</dbReference>
<dbReference type="SUPFAM" id="SSF52317">
    <property type="entry name" value="Class I glutamine amidotransferase-like"/>
    <property type="match status" value="1"/>
</dbReference>
<dbReference type="PROSITE" id="PS01236">
    <property type="entry name" value="PDXT_SNO_1"/>
    <property type="match status" value="1"/>
</dbReference>
<dbReference type="PROSITE" id="PS51130">
    <property type="entry name" value="PDXT_SNO_2"/>
    <property type="match status" value="1"/>
</dbReference>
<name>PDXT_STAEQ</name>
<evidence type="ECO:0000255" key="1">
    <source>
        <dbReference type="HAMAP-Rule" id="MF_01615"/>
    </source>
</evidence>
<accession>Q5HRN4</accession>
<organism>
    <name type="scientific">Staphylococcus epidermidis (strain ATCC 35984 / DSM 28319 / BCRC 17069 / CCUG 31568 / BM 3577 / RP62A)</name>
    <dbReference type="NCBI Taxonomy" id="176279"/>
    <lineage>
        <taxon>Bacteria</taxon>
        <taxon>Bacillati</taxon>
        <taxon>Bacillota</taxon>
        <taxon>Bacilli</taxon>
        <taxon>Bacillales</taxon>
        <taxon>Staphylococcaceae</taxon>
        <taxon>Staphylococcus</taxon>
    </lineage>
</organism>
<feature type="chain" id="PRO_0000135662" description="Pyridoxal 5'-phosphate synthase subunit PdxT">
    <location>
        <begin position="1"/>
        <end position="186"/>
    </location>
</feature>
<feature type="active site" description="Nucleophile" evidence="1">
    <location>
        <position position="76"/>
    </location>
</feature>
<feature type="active site" description="Charge relay system" evidence="1">
    <location>
        <position position="166"/>
    </location>
</feature>
<feature type="active site" description="Charge relay system" evidence="1">
    <location>
        <position position="168"/>
    </location>
</feature>
<feature type="binding site" evidence="1">
    <location>
        <begin position="47"/>
        <end position="49"/>
    </location>
    <ligand>
        <name>L-glutamine</name>
        <dbReference type="ChEBI" id="CHEBI:58359"/>
    </ligand>
</feature>
<feature type="binding site" evidence="1">
    <location>
        <position position="102"/>
    </location>
    <ligand>
        <name>L-glutamine</name>
        <dbReference type="ChEBI" id="CHEBI:58359"/>
    </ligand>
</feature>
<feature type="binding site" evidence="1">
    <location>
        <begin position="130"/>
        <end position="131"/>
    </location>
    <ligand>
        <name>L-glutamine</name>
        <dbReference type="ChEBI" id="CHEBI:58359"/>
    </ligand>
</feature>
<protein>
    <recommendedName>
        <fullName evidence="1">Pyridoxal 5'-phosphate synthase subunit PdxT</fullName>
        <ecNumber evidence="1">4.3.3.6</ecNumber>
    </recommendedName>
    <alternativeName>
        <fullName evidence="1">Pdx2</fullName>
    </alternativeName>
    <alternativeName>
        <fullName evidence="1">Pyridoxal 5'-phosphate synthase glutaminase subunit</fullName>
        <ecNumber evidence="1">3.5.1.2</ecNumber>
    </alternativeName>
</protein>